<comment type="function">
    <text evidence="1">May play a role in abiotic stress response.</text>
</comment>
<comment type="subcellular location">
    <subcellularLocation>
        <location evidence="3">Membrane</location>
        <topology evidence="3">Multi-pass membrane protein</topology>
    </subcellularLocation>
</comment>
<comment type="similarity">
    <text evidence="3">Belongs to the ADIPOR family.</text>
</comment>
<comment type="sequence caution" evidence="3">
    <conflict type="erroneous gene model prediction">
        <sequence resource="EMBL-CDS" id="AAM19133"/>
    </conflict>
    <text>The predicted gene has been split into 2 genes: Os03g0232800 and Os03g0232900.</text>
</comment>
<reference key="1">
    <citation type="journal article" date="2005" name="Genome Res.">
        <title>Sequence, annotation, and analysis of synteny between rice chromosome 3 and diverged grass species.</title>
        <authorList>
            <consortium name="The rice chromosome 3 sequencing consortium"/>
            <person name="Buell C.R."/>
            <person name="Yuan Q."/>
            <person name="Ouyang S."/>
            <person name="Liu J."/>
            <person name="Zhu W."/>
            <person name="Wang A."/>
            <person name="Maiti R."/>
            <person name="Haas B."/>
            <person name="Wortman J."/>
            <person name="Pertea M."/>
            <person name="Jones K.M."/>
            <person name="Kim M."/>
            <person name="Overton L."/>
            <person name="Tsitrin T."/>
            <person name="Fadrosh D."/>
            <person name="Bera J."/>
            <person name="Weaver B."/>
            <person name="Jin S."/>
            <person name="Johri S."/>
            <person name="Reardon M."/>
            <person name="Webb K."/>
            <person name="Hill J."/>
            <person name="Moffat K."/>
            <person name="Tallon L."/>
            <person name="Van Aken S."/>
            <person name="Lewis M."/>
            <person name="Utterback T."/>
            <person name="Feldblyum T."/>
            <person name="Zismann V."/>
            <person name="Iobst S."/>
            <person name="Hsiao J."/>
            <person name="de Vazeille A.R."/>
            <person name="Salzberg S.L."/>
            <person name="White O."/>
            <person name="Fraser C.M."/>
            <person name="Yu Y."/>
            <person name="Kim H."/>
            <person name="Rambo T."/>
            <person name="Currie J."/>
            <person name="Collura K."/>
            <person name="Kernodle-Thompson S."/>
            <person name="Wei F."/>
            <person name="Kudrna K."/>
            <person name="Ammiraju J.S.S."/>
            <person name="Luo M."/>
            <person name="Goicoechea J.L."/>
            <person name="Wing R.A."/>
            <person name="Henry D."/>
            <person name="Oates R."/>
            <person name="Palmer M."/>
            <person name="Pries G."/>
            <person name="Saski C."/>
            <person name="Simmons J."/>
            <person name="Soderlund C."/>
            <person name="Nelson W."/>
            <person name="de la Bastide M."/>
            <person name="Spiegel L."/>
            <person name="Nascimento L."/>
            <person name="Huang E."/>
            <person name="Preston R."/>
            <person name="Zutavern T."/>
            <person name="Palmer L."/>
            <person name="O'Shaughnessy A."/>
            <person name="Dike S."/>
            <person name="McCombie W.R."/>
            <person name="Minx P."/>
            <person name="Cordum H."/>
            <person name="Wilson R."/>
            <person name="Jin W."/>
            <person name="Lee H.R."/>
            <person name="Jiang J."/>
            <person name="Jackson S."/>
        </authorList>
    </citation>
    <scope>NUCLEOTIDE SEQUENCE [LARGE SCALE GENOMIC DNA]</scope>
    <source>
        <strain>cv. Nipponbare</strain>
    </source>
</reference>
<reference key="2">
    <citation type="journal article" date="2005" name="Nature">
        <title>The map-based sequence of the rice genome.</title>
        <authorList>
            <consortium name="International rice genome sequencing project (IRGSP)"/>
        </authorList>
    </citation>
    <scope>NUCLEOTIDE SEQUENCE [LARGE SCALE GENOMIC DNA]</scope>
    <source>
        <strain>cv. Nipponbare</strain>
    </source>
</reference>
<reference key="3">
    <citation type="journal article" date="2008" name="Nucleic Acids Res.">
        <title>The rice annotation project database (RAP-DB): 2008 update.</title>
        <authorList>
            <consortium name="The rice annotation project (RAP)"/>
        </authorList>
    </citation>
    <scope>GENOME REANNOTATION</scope>
    <source>
        <strain>cv. Nipponbare</strain>
    </source>
</reference>
<reference key="4">
    <citation type="journal article" date="2013" name="Rice">
        <title>Improvement of the Oryza sativa Nipponbare reference genome using next generation sequence and optical map data.</title>
        <authorList>
            <person name="Kawahara Y."/>
            <person name="de la Bastide M."/>
            <person name="Hamilton J.P."/>
            <person name="Kanamori H."/>
            <person name="McCombie W.R."/>
            <person name="Ouyang S."/>
            <person name="Schwartz D.C."/>
            <person name="Tanaka T."/>
            <person name="Wu J."/>
            <person name="Zhou S."/>
            <person name="Childs K.L."/>
            <person name="Davidson R.M."/>
            <person name="Lin H."/>
            <person name="Quesada-Ocampo L."/>
            <person name="Vaillancourt B."/>
            <person name="Sakai H."/>
            <person name="Lee S.S."/>
            <person name="Kim J."/>
            <person name="Numa H."/>
            <person name="Itoh T."/>
            <person name="Buell C.R."/>
            <person name="Matsumoto T."/>
        </authorList>
    </citation>
    <scope>GENOME REANNOTATION</scope>
    <source>
        <strain>cv. Nipponbare</strain>
    </source>
</reference>
<reference key="5">
    <citation type="journal article" date="2003" name="Science">
        <title>Collection, mapping, and annotation of over 28,000 cDNA clones from japonica rice.</title>
        <authorList>
            <consortium name="The rice full-length cDNA consortium"/>
        </authorList>
    </citation>
    <scope>NUCLEOTIDE SEQUENCE [LARGE SCALE MRNA]</scope>
    <source>
        <strain>cv. Nipponbare</strain>
    </source>
</reference>
<reference key="6">
    <citation type="journal article" date="2005" name="J. Exp. Bot.">
        <title>A novel gene family in Arabidopsis encoding putative heptahelical transmembrane proteins homologous to human adiponectin receptors and progestin receptors.</title>
        <authorList>
            <person name="Hsieh M.H."/>
            <person name="Goodman H.M."/>
        </authorList>
    </citation>
    <scope>GENE FAMILY</scope>
</reference>
<dbReference type="EMBL" id="AC103891">
    <property type="protein sequence ID" value="AAM19133.1"/>
    <property type="status" value="ALT_SEQ"/>
    <property type="molecule type" value="Genomic_DNA"/>
</dbReference>
<dbReference type="EMBL" id="DP000009">
    <property type="protein sequence ID" value="ABF94811.1"/>
    <property type="molecule type" value="Genomic_DNA"/>
</dbReference>
<dbReference type="EMBL" id="AP008209">
    <property type="protein sequence ID" value="BAF11385.1"/>
    <property type="molecule type" value="Genomic_DNA"/>
</dbReference>
<dbReference type="EMBL" id="AP014959">
    <property type="protein sequence ID" value="BAS83123.1"/>
    <property type="molecule type" value="Genomic_DNA"/>
</dbReference>
<dbReference type="EMBL" id="AK072709">
    <property type="protein sequence ID" value="BAG93109.1"/>
    <property type="molecule type" value="mRNA"/>
</dbReference>
<dbReference type="RefSeq" id="XP_015633161.1">
    <property type="nucleotide sequence ID" value="XM_015777675.1"/>
</dbReference>
<dbReference type="SMR" id="Q10PI5"/>
<dbReference type="FunCoup" id="Q10PI5">
    <property type="interactions" value="1777"/>
</dbReference>
<dbReference type="STRING" id="39947.Q10PI5"/>
<dbReference type="PaxDb" id="39947-Q10PI5"/>
<dbReference type="EnsemblPlants" id="Os03t0232900-01">
    <property type="protein sequence ID" value="Os03t0232900-01"/>
    <property type="gene ID" value="Os03g0232900"/>
</dbReference>
<dbReference type="Gramene" id="Os03t0232900-01">
    <property type="protein sequence ID" value="Os03t0232900-01"/>
    <property type="gene ID" value="Os03g0232900"/>
</dbReference>
<dbReference type="KEGG" id="dosa:Os03g0232900"/>
<dbReference type="eggNOG" id="KOG0748">
    <property type="taxonomic scope" value="Eukaryota"/>
</dbReference>
<dbReference type="HOGENOM" id="CLU_023075_4_1_1"/>
<dbReference type="InParanoid" id="Q10PI5"/>
<dbReference type="OMA" id="EHECNDE"/>
<dbReference type="OrthoDB" id="529367at2759"/>
<dbReference type="Proteomes" id="UP000000763">
    <property type="component" value="Chromosome 3"/>
</dbReference>
<dbReference type="Proteomes" id="UP000059680">
    <property type="component" value="Chromosome 3"/>
</dbReference>
<dbReference type="GO" id="GO:0016020">
    <property type="term" value="C:membrane"/>
    <property type="evidence" value="ECO:0007669"/>
    <property type="project" value="UniProtKB-SubCell"/>
</dbReference>
<dbReference type="GO" id="GO:0038023">
    <property type="term" value="F:signaling receptor activity"/>
    <property type="evidence" value="ECO:0000318"/>
    <property type="project" value="GO_Central"/>
</dbReference>
<dbReference type="GO" id="GO:0009725">
    <property type="term" value="P:response to hormone"/>
    <property type="evidence" value="ECO:0000318"/>
    <property type="project" value="GO_Central"/>
</dbReference>
<dbReference type="GO" id="GO:0009744">
    <property type="term" value="P:response to sucrose"/>
    <property type="evidence" value="ECO:0007669"/>
    <property type="project" value="UniProtKB-ARBA"/>
</dbReference>
<dbReference type="InterPro" id="IPR004254">
    <property type="entry name" value="AdipoR/HlyIII-related"/>
</dbReference>
<dbReference type="PANTHER" id="PTHR20855:SF52">
    <property type="entry name" value="ADIPONECTIN RECEPTOR PROTEIN"/>
    <property type="match status" value="1"/>
</dbReference>
<dbReference type="PANTHER" id="PTHR20855">
    <property type="entry name" value="ADIPOR/PROGESTIN RECEPTOR-RELATED"/>
    <property type="match status" value="1"/>
</dbReference>
<dbReference type="Pfam" id="PF03006">
    <property type="entry name" value="HlyIII"/>
    <property type="match status" value="1"/>
</dbReference>
<evidence type="ECO:0000250" key="1"/>
<evidence type="ECO:0000255" key="2"/>
<evidence type="ECO:0000305" key="3"/>
<keyword id="KW-0472">Membrane</keyword>
<keyword id="KW-1185">Reference proteome</keyword>
<keyword id="KW-0346">Stress response</keyword>
<keyword id="KW-0812">Transmembrane</keyword>
<keyword id="KW-1133">Transmembrane helix</keyword>
<protein>
    <recommendedName>
        <fullName>Heptahelical transmembrane protein ADIPOR3</fullName>
    </recommendedName>
    <alternativeName>
        <fullName>PAQR family protein ADIPOR3</fullName>
    </alternativeName>
</protein>
<sequence>MAAAAGEEVEAARWAEAEDERKEGLRRRRRYGLVEYRALPGYMRDNEYILRHYRCEWPLPQVLLSAFSIHNETLNVWTHLIGFFIFLVLTIYTATQVPNVVDLQSLQHLPDVLRNADLHKIQTELVACLPSLPHLSDLQKLKDELKSSWNSIEVLPSLSRWHLLELLSSCLPHRFTHSNETSLSVLQSMKEDIANMIAPQLIRPIPRWPFYAFLGGAMFCLLASSTCHLLSCHSRRLAYIMLRLDYAGIAALIATSFYPPVYYSFMCYPFFCNLYLSCITILGVATIAFSLLPVFQNPEFRTIRACLFFGMGASGVIPVIHKLILFWHQPEALHTTAYEVLMGLFYGIGALVYATRVPERWMPGKFDIAGHSHQLFHVLVVAGAYTHYHSGLVYLKWRDVQGC</sequence>
<organism>
    <name type="scientific">Oryza sativa subsp. japonica</name>
    <name type="common">Rice</name>
    <dbReference type="NCBI Taxonomy" id="39947"/>
    <lineage>
        <taxon>Eukaryota</taxon>
        <taxon>Viridiplantae</taxon>
        <taxon>Streptophyta</taxon>
        <taxon>Embryophyta</taxon>
        <taxon>Tracheophyta</taxon>
        <taxon>Spermatophyta</taxon>
        <taxon>Magnoliopsida</taxon>
        <taxon>Liliopsida</taxon>
        <taxon>Poales</taxon>
        <taxon>Poaceae</taxon>
        <taxon>BOP clade</taxon>
        <taxon>Oryzoideae</taxon>
        <taxon>Oryzeae</taxon>
        <taxon>Oryzinae</taxon>
        <taxon>Oryza</taxon>
        <taxon>Oryza sativa</taxon>
    </lineage>
</organism>
<proteinExistence type="evidence at transcript level"/>
<accession>Q10PI5</accession>
<accession>A0A0P0VV54</accession>
<accession>Q8S5X5</accession>
<gene>
    <name type="primary">ADIPOR3</name>
    <name type="ordered locus">Os03g0232900</name>
    <name type="ordered locus">LOC_Os03g13040</name>
    <name type="ORF">OJ1175C11.13</name>
</gene>
<feature type="chain" id="PRO_0000430054" description="Heptahelical transmembrane protein ADIPOR3">
    <location>
        <begin position="1"/>
        <end position="403"/>
    </location>
</feature>
<feature type="topological domain" description="Cytoplasmic" evidence="2">
    <location>
        <begin position="1"/>
        <end position="73"/>
    </location>
</feature>
<feature type="transmembrane region" description="Helical" evidence="2">
    <location>
        <begin position="74"/>
        <end position="94"/>
    </location>
</feature>
<feature type="topological domain" description="Extracellular" evidence="2">
    <location>
        <begin position="95"/>
        <end position="209"/>
    </location>
</feature>
<feature type="transmembrane region" description="Helical" evidence="2">
    <location>
        <begin position="210"/>
        <end position="230"/>
    </location>
</feature>
<feature type="topological domain" description="Cytoplasmic" evidence="2">
    <location>
        <begin position="231"/>
        <end position="246"/>
    </location>
</feature>
<feature type="transmembrane region" description="Helical" evidence="2">
    <location>
        <begin position="247"/>
        <end position="267"/>
    </location>
</feature>
<feature type="topological domain" description="Extracellular" evidence="2">
    <location>
        <begin position="268"/>
        <end position="274"/>
    </location>
</feature>
<feature type="transmembrane region" description="Helical" evidence="2">
    <location>
        <begin position="275"/>
        <end position="295"/>
    </location>
</feature>
<feature type="topological domain" description="Cytoplasmic" evidence="2">
    <location>
        <begin position="296"/>
        <end position="306"/>
    </location>
</feature>
<feature type="transmembrane region" description="Helical" evidence="2">
    <location>
        <begin position="307"/>
        <end position="327"/>
    </location>
</feature>
<feature type="topological domain" description="Extracellular" evidence="2">
    <location>
        <begin position="328"/>
        <end position="331"/>
    </location>
</feature>
<feature type="transmembrane region" description="Helical" evidence="2">
    <location>
        <begin position="332"/>
        <end position="352"/>
    </location>
</feature>
<feature type="topological domain" description="Cytoplasmic" evidence="2">
    <location>
        <begin position="353"/>
        <end position="374"/>
    </location>
</feature>
<feature type="transmembrane region" description="Helical" evidence="2">
    <location>
        <begin position="375"/>
        <end position="395"/>
    </location>
</feature>
<feature type="topological domain" description="Extracellular" evidence="2">
    <location>
        <begin position="396"/>
        <end position="403"/>
    </location>
</feature>
<name>ADPO3_ORYSJ</name>